<evidence type="ECO:0000250" key="1"/>
<evidence type="ECO:0000255" key="2">
    <source>
        <dbReference type="PROSITE-ProRule" id="PRU00858"/>
    </source>
</evidence>
<evidence type="ECO:0000305" key="3"/>
<dbReference type="EMBL" id="BC121500">
    <property type="protein sequence ID" value="AAI21501.1"/>
    <property type="status" value="ALT_INIT"/>
    <property type="molecule type" value="mRNA"/>
</dbReference>
<dbReference type="RefSeq" id="NP_001263620.1">
    <property type="nucleotide sequence ID" value="NM_001276691.1"/>
</dbReference>
<dbReference type="RefSeq" id="XP_017949734.1">
    <property type="nucleotide sequence ID" value="XM_018094245.1"/>
</dbReference>
<dbReference type="SMR" id="Q0V9K5"/>
<dbReference type="FunCoup" id="Q0V9K5">
    <property type="interactions" value="2449"/>
</dbReference>
<dbReference type="STRING" id="8364.ENSXETP00000053689"/>
<dbReference type="PaxDb" id="8364-ENSXETP00000012258"/>
<dbReference type="GeneID" id="779608"/>
<dbReference type="KEGG" id="xtr:779608"/>
<dbReference type="AGR" id="Xenbase:XB-GENE-1021689"/>
<dbReference type="CTD" id="5991"/>
<dbReference type="Xenbase" id="XB-GENE-1021689">
    <property type="gene designation" value="rfx3"/>
</dbReference>
<dbReference type="eggNOG" id="KOG3712">
    <property type="taxonomic scope" value="Eukaryota"/>
</dbReference>
<dbReference type="InParanoid" id="Q0V9K5"/>
<dbReference type="OrthoDB" id="10056949at2759"/>
<dbReference type="Proteomes" id="UP000008143">
    <property type="component" value="Chromosome 1"/>
</dbReference>
<dbReference type="Bgee" id="ENSXETG00000011698">
    <property type="expression patterns" value="Expressed in 4-cell stage embryo and 7 other cell types or tissues"/>
</dbReference>
<dbReference type="GO" id="GO:0005576">
    <property type="term" value="C:extracellular region"/>
    <property type="evidence" value="ECO:0007669"/>
    <property type="project" value="GOC"/>
</dbReference>
<dbReference type="GO" id="GO:0005634">
    <property type="term" value="C:nucleus"/>
    <property type="evidence" value="ECO:0007669"/>
    <property type="project" value="UniProtKB-SubCell"/>
</dbReference>
<dbReference type="GO" id="GO:0003700">
    <property type="term" value="F:DNA-binding transcription factor activity"/>
    <property type="evidence" value="ECO:0007669"/>
    <property type="project" value="InterPro"/>
</dbReference>
<dbReference type="GO" id="GO:0000976">
    <property type="term" value="F:transcription cis-regulatory region binding"/>
    <property type="evidence" value="ECO:0000250"/>
    <property type="project" value="UniProtKB"/>
</dbReference>
<dbReference type="GO" id="GO:0030154">
    <property type="term" value="P:cell differentiation"/>
    <property type="evidence" value="ECO:0007669"/>
    <property type="project" value="UniProtKB-KW"/>
</dbReference>
<dbReference type="GO" id="GO:0060285">
    <property type="term" value="P:cilium-dependent cell motility"/>
    <property type="evidence" value="ECO:0000250"/>
    <property type="project" value="UniProtKB"/>
</dbReference>
<dbReference type="GO" id="GO:0006351">
    <property type="term" value="P:DNA-templated transcription"/>
    <property type="evidence" value="ECO:0000250"/>
    <property type="project" value="UniProtKB"/>
</dbReference>
<dbReference type="GO" id="GO:0031018">
    <property type="term" value="P:endocrine pancreas development"/>
    <property type="evidence" value="ECO:0000250"/>
    <property type="project" value="UniProtKB"/>
</dbReference>
<dbReference type="GO" id="GO:0060287">
    <property type="term" value="P:epithelial cilium movement involved in determination of left/right asymmetry"/>
    <property type="evidence" value="ECO:0000250"/>
    <property type="project" value="UniProtKB"/>
</dbReference>
<dbReference type="GO" id="GO:0006355">
    <property type="term" value="P:regulation of DNA-templated transcription"/>
    <property type="evidence" value="ECO:0000250"/>
    <property type="project" value="UniProtKB"/>
</dbReference>
<dbReference type="GO" id="GO:0050796">
    <property type="term" value="P:regulation of insulin secretion"/>
    <property type="evidence" value="ECO:0000250"/>
    <property type="project" value="UniProtKB"/>
</dbReference>
<dbReference type="FunFam" id="1.10.10.10:FF:000017">
    <property type="entry name" value="transcription factor RFX3 isoform X1"/>
    <property type="match status" value="1"/>
</dbReference>
<dbReference type="Gene3D" id="1.10.10.10">
    <property type="entry name" value="Winged helix-like DNA-binding domain superfamily/Winged helix DNA-binding domain"/>
    <property type="match status" value="1"/>
</dbReference>
<dbReference type="InterPro" id="IPR003150">
    <property type="entry name" value="DNA-bd_RFX"/>
</dbReference>
<dbReference type="InterPro" id="IPR039779">
    <property type="entry name" value="RFX-like"/>
</dbReference>
<dbReference type="InterPro" id="IPR007668">
    <property type="entry name" value="RFX1_trans_act"/>
</dbReference>
<dbReference type="InterPro" id="IPR036388">
    <property type="entry name" value="WH-like_DNA-bd_sf"/>
</dbReference>
<dbReference type="InterPro" id="IPR036390">
    <property type="entry name" value="WH_DNA-bd_sf"/>
</dbReference>
<dbReference type="PANTHER" id="PTHR12619">
    <property type="entry name" value="RFX TRANSCRIPTION FACTOR FAMILY"/>
    <property type="match status" value="1"/>
</dbReference>
<dbReference type="PANTHER" id="PTHR12619:SF20">
    <property type="entry name" value="TRANSCRIPTION FACTOR RFX3"/>
    <property type="match status" value="1"/>
</dbReference>
<dbReference type="Pfam" id="PF25340">
    <property type="entry name" value="BCD_RFX"/>
    <property type="match status" value="1"/>
</dbReference>
<dbReference type="Pfam" id="PF04589">
    <property type="entry name" value="RFX1_trans_act"/>
    <property type="match status" value="1"/>
</dbReference>
<dbReference type="Pfam" id="PF02257">
    <property type="entry name" value="RFX_DNA_binding"/>
    <property type="match status" value="1"/>
</dbReference>
<dbReference type="SUPFAM" id="SSF46785">
    <property type="entry name" value="Winged helix' DNA-binding domain"/>
    <property type="match status" value="1"/>
</dbReference>
<dbReference type="PROSITE" id="PS51526">
    <property type="entry name" value="RFX_DBD"/>
    <property type="match status" value="1"/>
</dbReference>
<proteinExistence type="evidence at transcript level"/>
<keyword id="KW-0217">Developmental protein</keyword>
<keyword id="KW-0221">Differentiation</keyword>
<keyword id="KW-0238">DNA-binding</keyword>
<keyword id="KW-0539">Nucleus</keyword>
<keyword id="KW-1185">Reference proteome</keyword>
<keyword id="KW-0678">Repressor</keyword>
<keyword id="KW-0804">Transcription</keyword>
<keyword id="KW-0805">Transcription regulation</keyword>
<organism>
    <name type="scientific">Xenopus tropicalis</name>
    <name type="common">Western clawed frog</name>
    <name type="synonym">Silurana tropicalis</name>
    <dbReference type="NCBI Taxonomy" id="8364"/>
    <lineage>
        <taxon>Eukaryota</taxon>
        <taxon>Metazoa</taxon>
        <taxon>Chordata</taxon>
        <taxon>Craniata</taxon>
        <taxon>Vertebrata</taxon>
        <taxon>Euteleostomi</taxon>
        <taxon>Amphibia</taxon>
        <taxon>Batrachia</taxon>
        <taxon>Anura</taxon>
        <taxon>Pipoidea</taxon>
        <taxon>Pipidae</taxon>
        <taxon>Xenopodinae</taxon>
        <taxon>Xenopus</taxon>
        <taxon>Silurana</taxon>
    </lineage>
</organism>
<sequence>MQTSETVSDTGSTVTLQTSVAGQAAVPTQVVQQVPVQQQVQQVQTVQQVQHVYPAQVQYVEGSDTVYTNGAIRTTTYPYTETQMYSQNTGGNYFDTQGGSAQVTTVVSTHSMVGTGGIQMGVTGGQIISSTGGTYLIGNAMENSGHSVSHTTRASPATIEMAIETLQKSDGLSSHRSSLLNSHLQWLLDNYETAEGVSLPRSTLYNHYLRHCQEHKLDPVNAASFGKLIRSIFMGLRTRRLGTRGNSKYHYYGIRVKPDSPLNRLQEDMQYMAMRQQPMQQKQRYKPMQKVDGVGDGFAGSGQSGASVEQTVIAQSQHHQQFLDASRALPEFAEVEISSLPDGTTFEDIKSLQSLYREHCEAILDVVVNLQFSLIEKLWQTFWRYSPSSPADGSTITESGNLSEIESRLPKSKLILFCKNESIVKWMCNCDHMMYQSLVEILIPDVLRPIPSALTQAVRNFAKSLEGWLSSAMSNIPQRMIQTKVAAVSAFAQTLRRYTSLNHLAQAARAVLQNTSQINQMLNDLNRVDFANVQEQASWVCQCDDSMVQRLETDFKMTLQQQSTLEQWAAWLDNVVTQALKPYEGRPSFPKAARQFLLKWSFYSSMVIRDLTLRSAASFGSFHLIRLLYDEYMFYLVEHRVAQATGESPIAVMGEFGDLNDASPGNMEKDEGSDVESEIEEELDDSVEPPAKREKTELSQAFQVGCMQPSLEGSVQQSLVLNQLHSEHIVTSTQTIRQCSATGNTYTAV</sequence>
<accession>Q0V9K5</accession>
<protein>
    <recommendedName>
        <fullName>Transcription factor RFX3</fullName>
    </recommendedName>
    <alternativeName>
        <fullName>Regulatory factor X 3</fullName>
    </alternativeName>
</protein>
<comment type="function">
    <text evidence="1">Transcription factor required for ciliogenesis and islet cell differentiation during endocrine pancreas development.</text>
</comment>
<comment type="subcellular location">
    <subcellularLocation>
        <location evidence="2">Nucleus</location>
    </subcellularLocation>
</comment>
<comment type="similarity">
    <text evidence="2">Belongs to the RFX family.</text>
</comment>
<comment type="sequence caution" evidence="3">
    <conflict type="erroneous initiation">
        <sequence resource="EMBL-CDS" id="AAI21501"/>
    </conflict>
</comment>
<gene>
    <name type="primary">rfx3</name>
</gene>
<name>RFX3_XENTR</name>
<feature type="chain" id="PRO_0000392996" description="Transcription factor RFX3">
    <location>
        <begin position="1"/>
        <end position="749"/>
    </location>
</feature>
<feature type="DNA-binding region" description="RFX-type winged-helix" evidence="2">
    <location>
        <begin position="183"/>
        <end position="258"/>
    </location>
</feature>
<reference key="1">
    <citation type="submission" date="2006-08" db="EMBL/GenBank/DDBJ databases">
        <authorList>
            <consortium name="NIH - Xenopus Gene Collection (XGC) project"/>
        </authorList>
    </citation>
    <scope>NUCLEOTIDE SEQUENCE [LARGE SCALE MRNA]</scope>
</reference>